<organism>
    <name type="scientific">Saccharolobus islandicus (strain Y.N.15.51 / Yellowstone #2)</name>
    <name type="common">Sulfolobus islandicus</name>
    <dbReference type="NCBI Taxonomy" id="419942"/>
    <lineage>
        <taxon>Archaea</taxon>
        <taxon>Thermoproteota</taxon>
        <taxon>Thermoprotei</taxon>
        <taxon>Sulfolobales</taxon>
        <taxon>Sulfolobaceae</taxon>
        <taxon>Saccharolobus</taxon>
    </lineage>
</organism>
<reference key="1">
    <citation type="journal article" date="2009" name="Proc. Natl. Acad. Sci. U.S.A.">
        <title>Biogeography of the Sulfolobus islandicus pan-genome.</title>
        <authorList>
            <person name="Reno M.L."/>
            <person name="Held N.L."/>
            <person name="Fields C.J."/>
            <person name="Burke P.V."/>
            <person name="Whitaker R.J."/>
        </authorList>
    </citation>
    <scope>NUCLEOTIDE SEQUENCE [LARGE SCALE GENOMIC DNA]</scope>
    <source>
        <strain>Y.N.15.51 / Yellowstone #2</strain>
    </source>
</reference>
<gene>
    <name evidence="1" type="primary">ctaB</name>
    <name type="ordered locus">YN1551_1352</name>
</gene>
<accession>C3NH36</accession>
<feature type="chain" id="PRO_1000203463" description="Protoheme IX farnesyltransferase">
    <location>
        <begin position="1"/>
        <end position="285"/>
    </location>
</feature>
<feature type="transmembrane region" description="Helical" evidence="1">
    <location>
        <begin position="13"/>
        <end position="33"/>
    </location>
</feature>
<feature type="transmembrane region" description="Helical" evidence="1">
    <location>
        <begin position="40"/>
        <end position="60"/>
    </location>
</feature>
<feature type="transmembrane region" description="Helical" evidence="1">
    <location>
        <begin position="89"/>
        <end position="109"/>
    </location>
</feature>
<feature type="transmembrane region" description="Helical" evidence="1">
    <location>
        <begin position="110"/>
        <end position="130"/>
    </location>
</feature>
<feature type="transmembrane region" description="Helical" evidence="1">
    <location>
        <begin position="137"/>
        <end position="157"/>
    </location>
</feature>
<feature type="transmembrane region" description="Helical" evidence="1">
    <location>
        <begin position="165"/>
        <end position="185"/>
    </location>
</feature>
<feature type="transmembrane region" description="Helical" evidence="1">
    <location>
        <begin position="194"/>
        <end position="214"/>
    </location>
</feature>
<feature type="transmembrane region" description="Helical" evidence="1">
    <location>
        <begin position="230"/>
        <end position="252"/>
    </location>
</feature>
<feature type="transmembrane region" description="Helical" evidence="1">
    <location>
        <begin position="265"/>
        <end position="285"/>
    </location>
</feature>
<protein>
    <recommendedName>
        <fullName evidence="1">Protoheme IX farnesyltransferase</fullName>
        <ecNumber evidence="1">2.5.1.141</ecNumber>
    </recommendedName>
    <alternativeName>
        <fullName evidence="1">Heme B farnesyltransferase</fullName>
    </alternativeName>
    <alternativeName>
        <fullName evidence="1">Heme O synthase</fullName>
    </alternativeName>
</protein>
<name>COXX_SACI1</name>
<sequence length="285" mass="31250">MSLQQKIKAYLKLGKLGVVSLLDLAAVAGAFLAYKHGISLLPIIPMFIGGTLASMGAMIINSGIEIDRDKVMSRTSKRPTVVGYVNRKEAIIVGSLLAILGTALGFIDNILTAFFIALGVVIYIFVYTILLKPRTWLNIVIGGFAGSAAAWAGYTSLTNSLTLEGFLLGFLIFMWTPGHFWSLALKYREDYVNAHYPMLPAVVGITTSARAIAISNALMIPIVLLLGYYINLIALIAFSILSLFLMFLSYRLILNPTKEEAIKSFIFSNIYLMLILLIMIIVKLI</sequence>
<proteinExistence type="inferred from homology"/>
<comment type="function">
    <text evidence="1">Converts heme B (protoheme IX) to heme O by substitution of the vinyl group on carbon 2 of heme B porphyrin ring with a hydroxyethyl farnesyl side group.</text>
</comment>
<comment type="catalytic activity">
    <reaction evidence="1">
        <text>heme b + (2E,6E)-farnesyl diphosphate + H2O = Fe(II)-heme o + diphosphate</text>
        <dbReference type="Rhea" id="RHEA:28070"/>
        <dbReference type="ChEBI" id="CHEBI:15377"/>
        <dbReference type="ChEBI" id="CHEBI:33019"/>
        <dbReference type="ChEBI" id="CHEBI:60344"/>
        <dbReference type="ChEBI" id="CHEBI:60530"/>
        <dbReference type="ChEBI" id="CHEBI:175763"/>
        <dbReference type="EC" id="2.5.1.141"/>
    </reaction>
</comment>
<comment type="pathway">
    <text evidence="1">Porphyrin-containing compound metabolism; heme O biosynthesis; heme O from protoheme: step 1/1.</text>
</comment>
<comment type="subcellular location">
    <subcellularLocation>
        <location evidence="1">Cell membrane</location>
        <topology evidence="1">Multi-pass membrane protein</topology>
    </subcellularLocation>
</comment>
<comment type="miscellaneous">
    <text evidence="1">Carbon 2 of the heme B porphyrin ring is defined according to the Fischer nomenclature.</text>
</comment>
<comment type="similarity">
    <text evidence="1">Belongs to the UbiA prenyltransferase family. Protoheme IX farnesyltransferase subfamily.</text>
</comment>
<keyword id="KW-1003">Cell membrane</keyword>
<keyword id="KW-0350">Heme biosynthesis</keyword>
<keyword id="KW-0472">Membrane</keyword>
<keyword id="KW-0808">Transferase</keyword>
<keyword id="KW-0812">Transmembrane</keyword>
<keyword id="KW-1133">Transmembrane helix</keyword>
<dbReference type="EC" id="2.5.1.141" evidence="1"/>
<dbReference type="EMBL" id="CP001404">
    <property type="protein sequence ID" value="ACP48446.1"/>
    <property type="molecule type" value="Genomic_DNA"/>
</dbReference>
<dbReference type="SMR" id="C3NH36"/>
<dbReference type="KEGG" id="sin:YN1551_1352"/>
<dbReference type="HOGENOM" id="CLU_029631_0_1_2"/>
<dbReference type="UniPathway" id="UPA00834">
    <property type="reaction ID" value="UER00712"/>
</dbReference>
<dbReference type="Proteomes" id="UP000006818">
    <property type="component" value="Chromosome"/>
</dbReference>
<dbReference type="GO" id="GO:0005886">
    <property type="term" value="C:plasma membrane"/>
    <property type="evidence" value="ECO:0007669"/>
    <property type="project" value="UniProtKB-SubCell"/>
</dbReference>
<dbReference type="GO" id="GO:0008495">
    <property type="term" value="F:protoheme IX farnesyltransferase activity"/>
    <property type="evidence" value="ECO:0007669"/>
    <property type="project" value="UniProtKB-UniRule"/>
</dbReference>
<dbReference type="GO" id="GO:0048034">
    <property type="term" value="P:heme O biosynthetic process"/>
    <property type="evidence" value="ECO:0007669"/>
    <property type="project" value="UniProtKB-UniRule"/>
</dbReference>
<dbReference type="CDD" id="cd13957">
    <property type="entry name" value="PT_UbiA_Cox10"/>
    <property type="match status" value="1"/>
</dbReference>
<dbReference type="FunFam" id="1.10.357.140:FF:000018">
    <property type="entry name" value="Protoheme IX farnesyltransferase"/>
    <property type="match status" value="1"/>
</dbReference>
<dbReference type="Gene3D" id="1.10.357.140">
    <property type="entry name" value="UbiA prenyltransferase"/>
    <property type="match status" value="1"/>
</dbReference>
<dbReference type="HAMAP" id="MF_00154">
    <property type="entry name" value="CyoE_CtaB"/>
    <property type="match status" value="1"/>
</dbReference>
<dbReference type="InterPro" id="IPR006369">
    <property type="entry name" value="Protohaem_IX_farnesylTrfase"/>
</dbReference>
<dbReference type="InterPro" id="IPR000537">
    <property type="entry name" value="UbiA_prenyltransferase"/>
</dbReference>
<dbReference type="InterPro" id="IPR044878">
    <property type="entry name" value="UbiA_sf"/>
</dbReference>
<dbReference type="NCBIfam" id="TIGR01473">
    <property type="entry name" value="cyoE_ctaB"/>
    <property type="match status" value="1"/>
</dbReference>
<dbReference type="PANTHER" id="PTHR43448">
    <property type="entry name" value="PROTOHEME IX FARNESYLTRANSFERASE, MITOCHONDRIAL"/>
    <property type="match status" value="1"/>
</dbReference>
<dbReference type="PANTHER" id="PTHR43448:SF2">
    <property type="entry name" value="PROTOHEME IX FARNESYLTRANSFERASE, MITOCHONDRIAL"/>
    <property type="match status" value="1"/>
</dbReference>
<dbReference type="Pfam" id="PF01040">
    <property type="entry name" value="UbiA"/>
    <property type="match status" value="1"/>
</dbReference>
<evidence type="ECO:0000255" key="1">
    <source>
        <dbReference type="HAMAP-Rule" id="MF_00154"/>
    </source>
</evidence>